<organism>
    <name type="scientific">Piper cenocladum</name>
    <name type="common">Ant piper</name>
    <dbReference type="NCBI Taxonomy" id="398741"/>
    <lineage>
        <taxon>Eukaryota</taxon>
        <taxon>Viridiplantae</taxon>
        <taxon>Streptophyta</taxon>
        <taxon>Embryophyta</taxon>
        <taxon>Tracheophyta</taxon>
        <taxon>Spermatophyta</taxon>
        <taxon>Magnoliopsida</taxon>
        <taxon>Magnoliidae</taxon>
        <taxon>Piperales</taxon>
        <taxon>Piperaceae</taxon>
        <taxon>Piper</taxon>
    </lineage>
</organism>
<reference key="1">
    <citation type="journal article" date="2006" name="BMC Evol. Biol.">
        <title>Complete plastid genome sequences of Drimys, Liriodendron, and Piper: implications for the phylogenetic relationships of magnoliids.</title>
        <authorList>
            <person name="Cai Z."/>
            <person name="Penaflor C."/>
            <person name="Kuehl J.V."/>
            <person name="Leebens-Mack J."/>
            <person name="Carlson J.E."/>
            <person name="dePamphilis C.W."/>
            <person name="Boore J.L."/>
            <person name="Jansen R.K."/>
        </authorList>
    </citation>
    <scope>NUCLEOTIDE SEQUENCE [LARGE SCALE GENOMIC DNA]</scope>
</reference>
<accession>Q06GK8</accession>
<protein>
    <recommendedName>
        <fullName>NAD(P)H-quinone oxidoreductase subunit 6, chloroplastic</fullName>
        <ecNumber>7.1.1.-</ecNumber>
    </recommendedName>
    <alternativeName>
        <fullName>NAD(P)H dehydrogenase subunit 6</fullName>
    </alternativeName>
    <alternativeName>
        <fullName>NADH-plastoquinone oxidoreductase subunit 6</fullName>
    </alternativeName>
</protein>
<name>NU6C_PIPCE</name>
<evidence type="ECO:0000250" key="1"/>
<evidence type="ECO:0000255" key="2"/>
<evidence type="ECO:0000305" key="3"/>
<proteinExistence type="inferred from homology"/>
<geneLocation type="chloroplast"/>
<gene>
    <name type="primary">ndhG</name>
</gene>
<sequence>MGLPGPIHDILLVFLGSGIVLGSLGVILLTNTIYSAFSLGFVLVCISLFYILSNSYFVAAAQLLIYVGAINVLIIFAVMFMKGSEYSNDFSIWTVGDGVTSLVCTSIFFSLITTILDTSWYGIIWTTRSNQIMEQDLLSNVQQIGIHLVTDFILPFELISIVLLVALIGAIAMARQ</sequence>
<comment type="function">
    <text evidence="1">NDH shuttles electrons from NAD(P)H:plastoquinone, via FMN and iron-sulfur (Fe-S) centers, to quinones in the photosynthetic chain and possibly in a chloroplast respiratory chain. The immediate electron acceptor for the enzyme in this species is believed to be plastoquinone. Couples the redox reaction to proton translocation, and thus conserves the redox energy in a proton gradient (By similarity).</text>
</comment>
<comment type="catalytic activity">
    <reaction>
        <text>a plastoquinone + NADH + (n+1) H(+)(in) = a plastoquinol + NAD(+) + n H(+)(out)</text>
        <dbReference type="Rhea" id="RHEA:42608"/>
        <dbReference type="Rhea" id="RHEA-COMP:9561"/>
        <dbReference type="Rhea" id="RHEA-COMP:9562"/>
        <dbReference type="ChEBI" id="CHEBI:15378"/>
        <dbReference type="ChEBI" id="CHEBI:17757"/>
        <dbReference type="ChEBI" id="CHEBI:57540"/>
        <dbReference type="ChEBI" id="CHEBI:57945"/>
        <dbReference type="ChEBI" id="CHEBI:62192"/>
    </reaction>
</comment>
<comment type="catalytic activity">
    <reaction>
        <text>a plastoquinone + NADPH + (n+1) H(+)(in) = a plastoquinol + NADP(+) + n H(+)(out)</text>
        <dbReference type="Rhea" id="RHEA:42612"/>
        <dbReference type="Rhea" id="RHEA-COMP:9561"/>
        <dbReference type="Rhea" id="RHEA-COMP:9562"/>
        <dbReference type="ChEBI" id="CHEBI:15378"/>
        <dbReference type="ChEBI" id="CHEBI:17757"/>
        <dbReference type="ChEBI" id="CHEBI:57783"/>
        <dbReference type="ChEBI" id="CHEBI:58349"/>
        <dbReference type="ChEBI" id="CHEBI:62192"/>
    </reaction>
</comment>
<comment type="subunit">
    <text evidence="1">NDH is composed of at least 16 different subunits, 5 of which are encoded in the nucleus.</text>
</comment>
<comment type="subcellular location">
    <subcellularLocation>
        <location evidence="1">Plastid</location>
        <location evidence="1">Chloroplast thylakoid membrane</location>
        <topology evidence="1">Multi-pass membrane protein</topology>
    </subcellularLocation>
</comment>
<comment type="similarity">
    <text evidence="3">Belongs to the complex I subunit 6 family.</text>
</comment>
<feature type="chain" id="PRO_0000360285" description="NAD(P)H-quinone oxidoreductase subunit 6, chloroplastic">
    <location>
        <begin position="1"/>
        <end position="176"/>
    </location>
</feature>
<feature type="transmembrane region" description="Helical" evidence="2">
    <location>
        <begin position="10"/>
        <end position="30"/>
    </location>
</feature>
<feature type="transmembrane region" description="Helical" evidence="2">
    <location>
        <begin position="32"/>
        <end position="52"/>
    </location>
</feature>
<feature type="transmembrane region" description="Helical" evidence="2">
    <location>
        <begin position="61"/>
        <end position="81"/>
    </location>
</feature>
<feature type="transmembrane region" description="Helical" evidence="2">
    <location>
        <begin position="92"/>
        <end position="112"/>
    </location>
</feature>
<feature type="transmembrane region" description="Helical" evidence="2">
    <location>
        <begin position="152"/>
        <end position="172"/>
    </location>
</feature>
<keyword id="KW-0150">Chloroplast</keyword>
<keyword id="KW-0472">Membrane</keyword>
<keyword id="KW-0520">NAD</keyword>
<keyword id="KW-0521">NADP</keyword>
<keyword id="KW-0934">Plastid</keyword>
<keyword id="KW-0618">Plastoquinone</keyword>
<keyword id="KW-0874">Quinone</keyword>
<keyword id="KW-0793">Thylakoid</keyword>
<keyword id="KW-1278">Translocase</keyword>
<keyword id="KW-0812">Transmembrane</keyword>
<keyword id="KW-1133">Transmembrane helix</keyword>
<keyword id="KW-0813">Transport</keyword>
<dbReference type="EC" id="7.1.1.-"/>
<dbReference type="EMBL" id="DQ887677">
    <property type="protein sequence ID" value="ABI14523.1"/>
    <property type="molecule type" value="Genomic_DNA"/>
</dbReference>
<dbReference type="RefSeq" id="YP_784525.1">
    <property type="nucleotide sequence ID" value="NC_008457.1"/>
</dbReference>
<dbReference type="SMR" id="Q06GK8"/>
<dbReference type="GeneID" id="4363702"/>
<dbReference type="GO" id="GO:0009535">
    <property type="term" value="C:chloroplast thylakoid membrane"/>
    <property type="evidence" value="ECO:0007669"/>
    <property type="project" value="UniProtKB-SubCell"/>
</dbReference>
<dbReference type="GO" id="GO:0008137">
    <property type="term" value="F:NADH dehydrogenase (ubiquinone) activity"/>
    <property type="evidence" value="ECO:0007669"/>
    <property type="project" value="InterPro"/>
</dbReference>
<dbReference type="GO" id="GO:0048038">
    <property type="term" value="F:quinone binding"/>
    <property type="evidence" value="ECO:0007669"/>
    <property type="project" value="UniProtKB-KW"/>
</dbReference>
<dbReference type="FunFam" id="1.20.120.1200:FF:000002">
    <property type="entry name" value="NAD(P)H-quinone oxidoreductase subunit 6, chloroplastic"/>
    <property type="match status" value="1"/>
</dbReference>
<dbReference type="Gene3D" id="1.20.120.1200">
    <property type="entry name" value="NADH-ubiquinone/plastoquinone oxidoreductase chain 6, subunit NuoJ"/>
    <property type="match status" value="1"/>
</dbReference>
<dbReference type="InterPro" id="IPR050290">
    <property type="entry name" value="NAD(P)H-Q_Oxidoreduct_6"/>
</dbReference>
<dbReference type="InterPro" id="IPR001457">
    <property type="entry name" value="NADH_UbQ/plastoQ_OxRdtase_su6"/>
</dbReference>
<dbReference type="InterPro" id="IPR042106">
    <property type="entry name" value="Nuo/plastoQ_OxRdtase_6_NuoJ"/>
</dbReference>
<dbReference type="PANTHER" id="PTHR48479">
    <property type="entry name" value="NAD(P)H-QUINONE OXIDOREDUCTASE SUBUNIT 6, CHLOROPLASTIC"/>
    <property type="match status" value="1"/>
</dbReference>
<dbReference type="PANTHER" id="PTHR48479:SF1">
    <property type="entry name" value="NAD(P)H-QUINONE OXIDOREDUCTASE SUBUNIT 6, CHLOROPLASTIC"/>
    <property type="match status" value="1"/>
</dbReference>
<dbReference type="Pfam" id="PF00499">
    <property type="entry name" value="Oxidored_q3"/>
    <property type="match status" value="1"/>
</dbReference>